<keyword id="KW-1185">Reference proteome</keyword>
<keyword id="KW-0687">Ribonucleoprotein</keyword>
<keyword id="KW-0689">Ribosomal protein</keyword>
<accession>Q5NGR1</accession>
<name>RL27_FRATT</name>
<sequence>MAHKKAGGSTRNGRDSNPKYLGVKRYGGEFVKAGTIIIRQRGTKTHPGVNVGCGKDHTLFALKDGTVKFHTGGALNRKFVSIEE</sequence>
<feature type="chain" id="PRO_0000181090" description="Large ribosomal subunit protein bL27">
    <location>
        <begin position="1"/>
        <end position="84"/>
    </location>
</feature>
<feature type="region of interest" description="Disordered" evidence="2">
    <location>
        <begin position="1"/>
        <end position="20"/>
    </location>
</feature>
<proteinExistence type="inferred from homology"/>
<organism>
    <name type="scientific">Francisella tularensis subsp. tularensis (strain SCHU S4 / Schu 4)</name>
    <dbReference type="NCBI Taxonomy" id="177416"/>
    <lineage>
        <taxon>Bacteria</taxon>
        <taxon>Pseudomonadati</taxon>
        <taxon>Pseudomonadota</taxon>
        <taxon>Gammaproteobacteria</taxon>
        <taxon>Thiotrichales</taxon>
        <taxon>Francisellaceae</taxon>
        <taxon>Francisella</taxon>
    </lineage>
</organism>
<reference key="1">
    <citation type="journal article" date="2005" name="Nat. Genet.">
        <title>The complete genome sequence of Francisella tularensis, the causative agent of tularemia.</title>
        <authorList>
            <person name="Larsson P."/>
            <person name="Oyston P.C.F."/>
            <person name="Chain P."/>
            <person name="Chu M.C."/>
            <person name="Duffield M."/>
            <person name="Fuxelius H.-H."/>
            <person name="Garcia E."/>
            <person name="Haelltorp G."/>
            <person name="Johansson D."/>
            <person name="Isherwood K.E."/>
            <person name="Karp P.D."/>
            <person name="Larsson E."/>
            <person name="Liu Y."/>
            <person name="Michell S."/>
            <person name="Prior J."/>
            <person name="Prior R."/>
            <person name="Malfatti S."/>
            <person name="Sjoestedt A."/>
            <person name="Svensson K."/>
            <person name="Thompson N."/>
            <person name="Vergez L."/>
            <person name="Wagg J.K."/>
            <person name="Wren B.W."/>
            <person name="Lindler L.E."/>
            <person name="Andersson S.G.E."/>
            <person name="Forsman M."/>
            <person name="Titball R.W."/>
        </authorList>
    </citation>
    <scope>NUCLEOTIDE SEQUENCE [LARGE SCALE GENOMIC DNA]</scope>
    <source>
        <strain>SCHU S4 / Schu 4</strain>
    </source>
</reference>
<evidence type="ECO:0000255" key="1">
    <source>
        <dbReference type="HAMAP-Rule" id="MF_00539"/>
    </source>
</evidence>
<evidence type="ECO:0000256" key="2">
    <source>
        <dbReference type="SAM" id="MobiDB-lite"/>
    </source>
</evidence>
<evidence type="ECO:0000305" key="3"/>
<dbReference type="EMBL" id="AJ749949">
    <property type="protein sequence ID" value="CAG45406.1"/>
    <property type="molecule type" value="Genomic_DNA"/>
</dbReference>
<dbReference type="RefSeq" id="WP_003020646.1">
    <property type="nucleotide sequence ID" value="NZ_CP010290.1"/>
</dbReference>
<dbReference type="RefSeq" id="YP_169781.1">
    <property type="nucleotide sequence ID" value="NC_006570.2"/>
</dbReference>
<dbReference type="SMR" id="Q5NGR1"/>
<dbReference type="STRING" id="177416.FTT_0773"/>
<dbReference type="DNASU" id="3191996"/>
<dbReference type="EnsemblBacteria" id="CAG45406">
    <property type="protein sequence ID" value="CAG45406"/>
    <property type="gene ID" value="FTT_0773"/>
</dbReference>
<dbReference type="GeneID" id="75263827"/>
<dbReference type="KEGG" id="ftu:FTT_0773"/>
<dbReference type="eggNOG" id="COG0211">
    <property type="taxonomic scope" value="Bacteria"/>
</dbReference>
<dbReference type="OrthoDB" id="9803474at2"/>
<dbReference type="Proteomes" id="UP000001174">
    <property type="component" value="Chromosome"/>
</dbReference>
<dbReference type="GO" id="GO:0022625">
    <property type="term" value="C:cytosolic large ribosomal subunit"/>
    <property type="evidence" value="ECO:0007669"/>
    <property type="project" value="TreeGrafter"/>
</dbReference>
<dbReference type="GO" id="GO:0003735">
    <property type="term" value="F:structural constituent of ribosome"/>
    <property type="evidence" value="ECO:0007669"/>
    <property type="project" value="InterPro"/>
</dbReference>
<dbReference type="GO" id="GO:0006412">
    <property type="term" value="P:translation"/>
    <property type="evidence" value="ECO:0007669"/>
    <property type="project" value="UniProtKB-UniRule"/>
</dbReference>
<dbReference type="FunFam" id="2.40.50.100:FF:000001">
    <property type="entry name" value="50S ribosomal protein L27"/>
    <property type="match status" value="1"/>
</dbReference>
<dbReference type="Gene3D" id="2.40.50.100">
    <property type="match status" value="1"/>
</dbReference>
<dbReference type="HAMAP" id="MF_00539">
    <property type="entry name" value="Ribosomal_bL27"/>
    <property type="match status" value="1"/>
</dbReference>
<dbReference type="InterPro" id="IPR001684">
    <property type="entry name" value="Ribosomal_bL27"/>
</dbReference>
<dbReference type="InterPro" id="IPR018261">
    <property type="entry name" value="Ribosomal_bL27_CS"/>
</dbReference>
<dbReference type="NCBIfam" id="TIGR00062">
    <property type="entry name" value="L27"/>
    <property type="match status" value="1"/>
</dbReference>
<dbReference type="PANTHER" id="PTHR15893:SF0">
    <property type="entry name" value="LARGE RIBOSOMAL SUBUNIT PROTEIN BL27M"/>
    <property type="match status" value="1"/>
</dbReference>
<dbReference type="PANTHER" id="PTHR15893">
    <property type="entry name" value="RIBOSOMAL PROTEIN L27"/>
    <property type="match status" value="1"/>
</dbReference>
<dbReference type="Pfam" id="PF01016">
    <property type="entry name" value="Ribosomal_L27"/>
    <property type="match status" value="1"/>
</dbReference>
<dbReference type="PRINTS" id="PR00063">
    <property type="entry name" value="RIBOSOMALL27"/>
</dbReference>
<dbReference type="SUPFAM" id="SSF110324">
    <property type="entry name" value="Ribosomal L27 protein-like"/>
    <property type="match status" value="1"/>
</dbReference>
<dbReference type="PROSITE" id="PS00831">
    <property type="entry name" value="RIBOSOMAL_L27"/>
    <property type="match status" value="1"/>
</dbReference>
<gene>
    <name evidence="1" type="primary">rpmA</name>
    <name type="ordered locus">FTT_0773</name>
</gene>
<comment type="similarity">
    <text evidence="1">Belongs to the bacterial ribosomal protein bL27 family.</text>
</comment>
<protein>
    <recommendedName>
        <fullName evidence="1">Large ribosomal subunit protein bL27</fullName>
    </recommendedName>
    <alternativeName>
        <fullName evidence="3">50S ribosomal protein L27</fullName>
    </alternativeName>
</protein>